<comment type="function">
    <text evidence="1">Binds 16S rRNA, required for the assembly of 30S particles.</text>
</comment>
<comment type="cofactor">
    <cofactor evidence="1">
        <name>Zn(2+)</name>
        <dbReference type="ChEBI" id="CHEBI:29105"/>
    </cofactor>
    <text evidence="1">Binds 1 zinc ion per subunit.</text>
</comment>
<comment type="subunit">
    <text evidence="1">Part of the 30S ribosomal subunit.</text>
</comment>
<comment type="similarity">
    <text evidence="1">Belongs to the universal ribosomal protein uS14 family. Zinc-binding uS14 subfamily.</text>
</comment>
<comment type="sequence caution" evidence="2">
    <conflict type="erroneous initiation">
        <sequence resource="EMBL-CDS" id="AAY79975"/>
    </conflict>
    <text>Extended N-terminus.</text>
</comment>
<name>RS14Z_SULAC</name>
<gene>
    <name evidence="1" type="primary">rps14</name>
    <name type="ordered locus">Saci_0583</name>
</gene>
<feature type="chain" id="PRO_0000130998" description="Small ribosomal subunit protein uS14">
    <location>
        <begin position="1"/>
        <end position="54"/>
    </location>
</feature>
<feature type="binding site" evidence="1">
    <location>
        <position position="19"/>
    </location>
    <ligand>
        <name>Zn(2+)</name>
        <dbReference type="ChEBI" id="CHEBI:29105"/>
    </ligand>
</feature>
<feature type="binding site" evidence="1">
    <location>
        <position position="22"/>
    </location>
    <ligand>
        <name>Zn(2+)</name>
        <dbReference type="ChEBI" id="CHEBI:29105"/>
    </ligand>
</feature>
<feature type="binding site" evidence="1">
    <location>
        <position position="37"/>
    </location>
    <ligand>
        <name>Zn(2+)</name>
        <dbReference type="ChEBI" id="CHEBI:29105"/>
    </ligand>
</feature>
<feature type="binding site" evidence="1">
    <location>
        <position position="40"/>
    </location>
    <ligand>
        <name>Zn(2+)</name>
        <dbReference type="ChEBI" id="CHEBI:29105"/>
    </ligand>
</feature>
<feature type="sequence conflict" description="In Ref. 1; CAA69091." evidence="2" ref="1">
    <original>I</original>
    <variation>M</variation>
    <location>
        <position position="29"/>
    </location>
</feature>
<protein>
    <recommendedName>
        <fullName evidence="1">Small ribosomal subunit protein uS14</fullName>
    </recommendedName>
    <alternativeName>
        <fullName evidence="2">30S ribosomal protein S14 type Z</fullName>
    </alternativeName>
</protein>
<dbReference type="EMBL" id="Y07778">
    <property type="protein sequence ID" value="CAA69091.1"/>
    <property type="molecule type" value="Genomic_DNA"/>
</dbReference>
<dbReference type="EMBL" id="CP000077">
    <property type="protein sequence ID" value="AAY79975.1"/>
    <property type="status" value="ALT_INIT"/>
    <property type="molecule type" value="Genomic_DNA"/>
</dbReference>
<dbReference type="RefSeq" id="WP_011277477.1">
    <property type="nucleotide sequence ID" value="NC_007181.1"/>
</dbReference>
<dbReference type="PDB" id="8HKX">
    <property type="method" value="EM"/>
    <property type="resolution" value="3.14 A"/>
    <property type="chains" value="S14P=3-54"/>
</dbReference>
<dbReference type="PDB" id="8HKY">
    <property type="method" value="EM"/>
    <property type="resolution" value="4.45 A"/>
    <property type="chains" value="S14P=3-54"/>
</dbReference>
<dbReference type="PDB" id="8HKZ">
    <property type="method" value="EM"/>
    <property type="resolution" value="4.78 A"/>
    <property type="chains" value="S14P=3-54"/>
</dbReference>
<dbReference type="PDB" id="8HL1">
    <property type="method" value="EM"/>
    <property type="resolution" value="3.93 A"/>
    <property type="chains" value="S14P=3-54"/>
</dbReference>
<dbReference type="PDB" id="8HL2">
    <property type="method" value="EM"/>
    <property type="resolution" value="4.10 A"/>
    <property type="chains" value="S14P=3-54"/>
</dbReference>
<dbReference type="PDB" id="8HL3">
    <property type="method" value="EM"/>
    <property type="resolution" value="4.80 A"/>
    <property type="chains" value="S14P=3-54"/>
</dbReference>
<dbReference type="PDB" id="8HL4">
    <property type="method" value="EM"/>
    <property type="resolution" value="4.62 A"/>
    <property type="chains" value="S14P=3-54"/>
</dbReference>
<dbReference type="PDB" id="8HL5">
    <property type="method" value="EM"/>
    <property type="resolution" value="5.72 A"/>
    <property type="chains" value="S14P=3-54"/>
</dbReference>
<dbReference type="PDB" id="8WKP">
    <property type="method" value="EM"/>
    <property type="resolution" value="4.62 A"/>
    <property type="chains" value="S14P=3-54"/>
</dbReference>
<dbReference type="PDB" id="8WQ2">
    <property type="method" value="EM"/>
    <property type="resolution" value="4.10 A"/>
    <property type="chains" value="S14P=3-54"/>
</dbReference>
<dbReference type="PDB" id="8WQ4">
    <property type="method" value="EM"/>
    <property type="resolution" value="4.53 A"/>
    <property type="chains" value="S14P=3-54"/>
</dbReference>
<dbReference type="PDBsum" id="8HKX"/>
<dbReference type="PDBsum" id="8HKY"/>
<dbReference type="PDBsum" id="8HKZ"/>
<dbReference type="PDBsum" id="8HL1"/>
<dbReference type="PDBsum" id="8HL2"/>
<dbReference type="PDBsum" id="8HL3"/>
<dbReference type="PDBsum" id="8HL4"/>
<dbReference type="PDBsum" id="8HL5"/>
<dbReference type="PDBsum" id="8WKP"/>
<dbReference type="PDBsum" id="8WQ2"/>
<dbReference type="PDBsum" id="8WQ4"/>
<dbReference type="EMDB" id="EMD-34862"/>
<dbReference type="EMDB" id="EMD-34863"/>
<dbReference type="EMDB" id="EMD-34864"/>
<dbReference type="EMDB" id="EMD-34866"/>
<dbReference type="EMDB" id="EMD-34867"/>
<dbReference type="EMDB" id="EMD-34868"/>
<dbReference type="EMDB" id="EMD-34869"/>
<dbReference type="EMDB" id="EMD-34870"/>
<dbReference type="EMDB" id="EMD-37604"/>
<dbReference type="EMDB" id="EMD-37733"/>
<dbReference type="EMDB" id="EMD-37734"/>
<dbReference type="SMR" id="O05635"/>
<dbReference type="STRING" id="330779.Saci_0583"/>
<dbReference type="GeneID" id="31536133"/>
<dbReference type="KEGG" id="sai:Saci_0583"/>
<dbReference type="eggNOG" id="arCOG00782">
    <property type="taxonomic scope" value="Archaea"/>
</dbReference>
<dbReference type="HOGENOM" id="CLU_177289_2_1_2"/>
<dbReference type="Proteomes" id="UP000001018">
    <property type="component" value="Chromosome"/>
</dbReference>
<dbReference type="GO" id="GO:0022627">
    <property type="term" value="C:cytosolic small ribosomal subunit"/>
    <property type="evidence" value="ECO:0007669"/>
    <property type="project" value="TreeGrafter"/>
</dbReference>
<dbReference type="GO" id="GO:0019843">
    <property type="term" value="F:rRNA binding"/>
    <property type="evidence" value="ECO:0007669"/>
    <property type="project" value="UniProtKB-UniRule"/>
</dbReference>
<dbReference type="GO" id="GO:0003735">
    <property type="term" value="F:structural constituent of ribosome"/>
    <property type="evidence" value="ECO:0007669"/>
    <property type="project" value="InterPro"/>
</dbReference>
<dbReference type="GO" id="GO:0008270">
    <property type="term" value="F:zinc ion binding"/>
    <property type="evidence" value="ECO:0007669"/>
    <property type="project" value="UniProtKB-UniRule"/>
</dbReference>
<dbReference type="GO" id="GO:0002181">
    <property type="term" value="P:cytoplasmic translation"/>
    <property type="evidence" value="ECO:0007669"/>
    <property type="project" value="TreeGrafter"/>
</dbReference>
<dbReference type="FunFam" id="4.10.830.10:FF:000002">
    <property type="entry name" value="40S ribosomal protein S29"/>
    <property type="match status" value="1"/>
</dbReference>
<dbReference type="Gene3D" id="4.10.830.10">
    <property type="entry name" value="30s Ribosomal Protein S14, Chain N"/>
    <property type="match status" value="1"/>
</dbReference>
<dbReference type="HAMAP" id="MF_01364_A">
    <property type="entry name" value="Ribosomal_uS14_2_A"/>
    <property type="match status" value="1"/>
</dbReference>
<dbReference type="InterPro" id="IPR001209">
    <property type="entry name" value="Ribosomal_uS14"/>
</dbReference>
<dbReference type="InterPro" id="IPR023676">
    <property type="entry name" value="Ribosomal_uS14_arc"/>
</dbReference>
<dbReference type="InterPro" id="IPR018271">
    <property type="entry name" value="Ribosomal_uS14_CS"/>
</dbReference>
<dbReference type="InterPro" id="IPR039744">
    <property type="entry name" value="RIbosomal_uS14_euk_arc"/>
</dbReference>
<dbReference type="InterPro" id="IPR043140">
    <property type="entry name" value="Ribosomal_uS14_sf"/>
</dbReference>
<dbReference type="NCBIfam" id="NF004424">
    <property type="entry name" value="PRK05766.1"/>
    <property type="match status" value="1"/>
</dbReference>
<dbReference type="PANTHER" id="PTHR12010">
    <property type="entry name" value="40S RIBOSOMAL PROTEIN S29"/>
    <property type="match status" value="1"/>
</dbReference>
<dbReference type="PANTHER" id="PTHR12010:SF2">
    <property type="entry name" value="40S RIBOSOMAL PROTEIN S29"/>
    <property type="match status" value="1"/>
</dbReference>
<dbReference type="Pfam" id="PF00253">
    <property type="entry name" value="Ribosomal_S14"/>
    <property type="match status" value="1"/>
</dbReference>
<dbReference type="PROSITE" id="PS00527">
    <property type="entry name" value="RIBOSOMAL_S14"/>
    <property type="match status" value="1"/>
</dbReference>
<evidence type="ECO:0000255" key="1">
    <source>
        <dbReference type="HAMAP-Rule" id="MF_01364"/>
    </source>
</evidence>
<evidence type="ECO:0000305" key="2"/>
<organism>
    <name type="scientific">Sulfolobus acidocaldarius (strain ATCC 33909 / DSM 639 / JCM 8929 / NBRC 15157 / NCIMB 11770)</name>
    <dbReference type="NCBI Taxonomy" id="330779"/>
    <lineage>
        <taxon>Archaea</taxon>
        <taxon>Thermoproteota</taxon>
        <taxon>Thermoprotei</taxon>
        <taxon>Sulfolobales</taxon>
        <taxon>Sulfolobaceae</taxon>
        <taxon>Sulfolobus</taxon>
    </lineage>
</organism>
<proteinExistence type="evidence at protein level"/>
<sequence>MGKYKPPAERRFGKGVQLCKRCGSRDSVIQKYGLYLCRQCFREVAYPMGFRKTR</sequence>
<reference key="1">
    <citation type="journal article" date="1999" name="Mol. Phylogenet. Evol.">
        <title>The structure and evolution of the ribosomal proteins encoded in the spc operon of the archaeon (Crenarchaeota) Sulfolobus acidocaldarius.</title>
        <authorList>
            <person name="Yang D."/>
            <person name="Kusser I."/>
            <person name="Koepke A.K."/>
            <person name="Koop B.F."/>
            <person name="Matheson A.T."/>
        </authorList>
    </citation>
    <scope>NUCLEOTIDE SEQUENCE [GENOMIC DNA]</scope>
    <source>
        <strain>ATCC 33909 / DSM 639 / JCM 8929 / NBRC 15157 / NCIMB 11770</strain>
    </source>
</reference>
<reference key="2">
    <citation type="journal article" date="2005" name="J. Bacteriol.">
        <title>The genome of Sulfolobus acidocaldarius, a model organism of the Crenarchaeota.</title>
        <authorList>
            <person name="Chen L."/>
            <person name="Bruegger K."/>
            <person name="Skovgaard M."/>
            <person name="Redder P."/>
            <person name="She Q."/>
            <person name="Torarinsson E."/>
            <person name="Greve B."/>
            <person name="Awayez M."/>
            <person name="Zibat A."/>
            <person name="Klenk H.-P."/>
            <person name="Garrett R.A."/>
        </authorList>
    </citation>
    <scope>NUCLEOTIDE SEQUENCE [LARGE SCALE GENOMIC DNA]</scope>
    <source>
        <strain>ATCC 33909 / DSM 639 / JCM 8929 / NBRC 15157 / NCIMB 11770</strain>
    </source>
</reference>
<keyword id="KW-0002">3D-structure</keyword>
<keyword id="KW-0479">Metal-binding</keyword>
<keyword id="KW-1185">Reference proteome</keyword>
<keyword id="KW-0687">Ribonucleoprotein</keyword>
<keyword id="KW-0689">Ribosomal protein</keyword>
<keyword id="KW-0694">RNA-binding</keyword>
<keyword id="KW-0699">rRNA-binding</keyword>
<keyword id="KW-0862">Zinc</keyword>
<accession>O05635</accession>
<accession>Q4JB54</accession>